<comment type="function">
    <text evidence="1">Catalyzes the attachment of serine to tRNA(Ser). Is also able to aminoacylate tRNA(Sec) with serine, to form the misacylated tRNA L-seryl-tRNA(Sec), which will be further converted into selenocysteinyl-tRNA(Sec).</text>
</comment>
<comment type="catalytic activity">
    <reaction evidence="1">
        <text>tRNA(Ser) + L-serine + ATP = L-seryl-tRNA(Ser) + AMP + diphosphate + H(+)</text>
        <dbReference type="Rhea" id="RHEA:12292"/>
        <dbReference type="Rhea" id="RHEA-COMP:9669"/>
        <dbReference type="Rhea" id="RHEA-COMP:9703"/>
        <dbReference type="ChEBI" id="CHEBI:15378"/>
        <dbReference type="ChEBI" id="CHEBI:30616"/>
        <dbReference type="ChEBI" id="CHEBI:33019"/>
        <dbReference type="ChEBI" id="CHEBI:33384"/>
        <dbReference type="ChEBI" id="CHEBI:78442"/>
        <dbReference type="ChEBI" id="CHEBI:78533"/>
        <dbReference type="ChEBI" id="CHEBI:456215"/>
        <dbReference type="EC" id="6.1.1.11"/>
    </reaction>
</comment>
<comment type="catalytic activity">
    <reaction evidence="1">
        <text>tRNA(Sec) + L-serine + ATP = L-seryl-tRNA(Sec) + AMP + diphosphate + H(+)</text>
        <dbReference type="Rhea" id="RHEA:42580"/>
        <dbReference type="Rhea" id="RHEA-COMP:9742"/>
        <dbReference type="Rhea" id="RHEA-COMP:10128"/>
        <dbReference type="ChEBI" id="CHEBI:15378"/>
        <dbReference type="ChEBI" id="CHEBI:30616"/>
        <dbReference type="ChEBI" id="CHEBI:33019"/>
        <dbReference type="ChEBI" id="CHEBI:33384"/>
        <dbReference type="ChEBI" id="CHEBI:78442"/>
        <dbReference type="ChEBI" id="CHEBI:78533"/>
        <dbReference type="ChEBI" id="CHEBI:456215"/>
        <dbReference type="EC" id="6.1.1.11"/>
    </reaction>
</comment>
<comment type="pathway">
    <text evidence="1">Aminoacyl-tRNA biosynthesis; selenocysteinyl-tRNA(Sec) biosynthesis; L-seryl-tRNA(Sec) from L-serine and tRNA(Sec): step 1/1.</text>
</comment>
<comment type="subunit">
    <text evidence="1">Homodimer. The tRNA molecule binds across the dimer.</text>
</comment>
<comment type="subcellular location">
    <subcellularLocation>
        <location evidence="1">Cytoplasm</location>
    </subcellularLocation>
</comment>
<comment type="domain">
    <text evidence="1">Consists of two distinct domains, a catalytic core and a N-terminal extension that is involved in tRNA binding.</text>
</comment>
<comment type="similarity">
    <text evidence="1">Belongs to the class-II aminoacyl-tRNA synthetase family. Type-1 seryl-tRNA synthetase subfamily.</text>
</comment>
<accession>B5XY99</accession>
<dbReference type="EC" id="6.1.1.11" evidence="1"/>
<dbReference type="EMBL" id="CP000964">
    <property type="protein sequence ID" value="ACI08195.1"/>
    <property type="molecule type" value="Genomic_DNA"/>
</dbReference>
<dbReference type="SMR" id="B5XY99"/>
<dbReference type="KEGG" id="kpe:KPK_3635"/>
<dbReference type="HOGENOM" id="CLU_023797_1_1_6"/>
<dbReference type="UniPathway" id="UPA00906">
    <property type="reaction ID" value="UER00895"/>
</dbReference>
<dbReference type="Proteomes" id="UP000001734">
    <property type="component" value="Chromosome"/>
</dbReference>
<dbReference type="GO" id="GO:0005737">
    <property type="term" value="C:cytoplasm"/>
    <property type="evidence" value="ECO:0007669"/>
    <property type="project" value="UniProtKB-SubCell"/>
</dbReference>
<dbReference type="GO" id="GO:0005524">
    <property type="term" value="F:ATP binding"/>
    <property type="evidence" value="ECO:0007669"/>
    <property type="project" value="UniProtKB-UniRule"/>
</dbReference>
<dbReference type="GO" id="GO:0004828">
    <property type="term" value="F:serine-tRNA ligase activity"/>
    <property type="evidence" value="ECO:0007669"/>
    <property type="project" value="UniProtKB-UniRule"/>
</dbReference>
<dbReference type="GO" id="GO:0016260">
    <property type="term" value="P:selenocysteine biosynthetic process"/>
    <property type="evidence" value="ECO:0007669"/>
    <property type="project" value="UniProtKB-UniRule"/>
</dbReference>
<dbReference type="GO" id="GO:0006434">
    <property type="term" value="P:seryl-tRNA aminoacylation"/>
    <property type="evidence" value="ECO:0007669"/>
    <property type="project" value="UniProtKB-UniRule"/>
</dbReference>
<dbReference type="CDD" id="cd00770">
    <property type="entry name" value="SerRS_core"/>
    <property type="match status" value="1"/>
</dbReference>
<dbReference type="FunFam" id="1.10.287.40:FF:000001">
    <property type="entry name" value="Serine--tRNA ligase"/>
    <property type="match status" value="1"/>
</dbReference>
<dbReference type="FunFam" id="3.30.930.10:FF:000018">
    <property type="entry name" value="Serine--tRNA ligase"/>
    <property type="match status" value="1"/>
</dbReference>
<dbReference type="Gene3D" id="3.30.930.10">
    <property type="entry name" value="Bira Bifunctional Protein, Domain 2"/>
    <property type="match status" value="1"/>
</dbReference>
<dbReference type="Gene3D" id="1.10.287.40">
    <property type="entry name" value="Serine-tRNA synthetase, tRNA binding domain"/>
    <property type="match status" value="1"/>
</dbReference>
<dbReference type="HAMAP" id="MF_00176">
    <property type="entry name" value="Ser_tRNA_synth_type1"/>
    <property type="match status" value="1"/>
</dbReference>
<dbReference type="InterPro" id="IPR002314">
    <property type="entry name" value="aa-tRNA-synt_IIb"/>
</dbReference>
<dbReference type="InterPro" id="IPR006195">
    <property type="entry name" value="aa-tRNA-synth_II"/>
</dbReference>
<dbReference type="InterPro" id="IPR045864">
    <property type="entry name" value="aa-tRNA-synth_II/BPL/LPL"/>
</dbReference>
<dbReference type="InterPro" id="IPR002317">
    <property type="entry name" value="Ser-tRNA-ligase_type_1"/>
</dbReference>
<dbReference type="InterPro" id="IPR015866">
    <property type="entry name" value="Ser-tRNA-synth_1_N"/>
</dbReference>
<dbReference type="InterPro" id="IPR042103">
    <property type="entry name" value="SerRS_1_N_sf"/>
</dbReference>
<dbReference type="InterPro" id="IPR033729">
    <property type="entry name" value="SerRS_core"/>
</dbReference>
<dbReference type="InterPro" id="IPR010978">
    <property type="entry name" value="tRNA-bd_arm"/>
</dbReference>
<dbReference type="NCBIfam" id="TIGR00414">
    <property type="entry name" value="serS"/>
    <property type="match status" value="1"/>
</dbReference>
<dbReference type="PANTHER" id="PTHR43697:SF1">
    <property type="entry name" value="SERINE--TRNA LIGASE"/>
    <property type="match status" value="1"/>
</dbReference>
<dbReference type="PANTHER" id="PTHR43697">
    <property type="entry name" value="SERYL-TRNA SYNTHETASE"/>
    <property type="match status" value="1"/>
</dbReference>
<dbReference type="Pfam" id="PF02403">
    <property type="entry name" value="Seryl_tRNA_N"/>
    <property type="match status" value="1"/>
</dbReference>
<dbReference type="Pfam" id="PF00587">
    <property type="entry name" value="tRNA-synt_2b"/>
    <property type="match status" value="1"/>
</dbReference>
<dbReference type="PIRSF" id="PIRSF001529">
    <property type="entry name" value="Ser-tRNA-synth_IIa"/>
    <property type="match status" value="1"/>
</dbReference>
<dbReference type="PRINTS" id="PR00981">
    <property type="entry name" value="TRNASYNTHSER"/>
</dbReference>
<dbReference type="SUPFAM" id="SSF55681">
    <property type="entry name" value="Class II aaRS and biotin synthetases"/>
    <property type="match status" value="1"/>
</dbReference>
<dbReference type="SUPFAM" id="SSF46589">
    <property type="entry name" value="tRNA-binding arm"/>
    <property type="match status" value="1"/>
</dbReference>
<dbReference type="PROSITE" id="PS50862">
    <property type="entry name" value="AA_TRNA_LIGASE_II"/>
    <property type="match status" value="1"/>
</dbReference>
<gene>
    <name evidence="1" type="primary">serS</name>
    <name type="ordered locus">KPK_3635</name>
</gene>
<protein>
    <recommendedName>
        <fullName evidence="1">Serine--tRNA ligase</fullName>
        <ecNumber evidence="1">6.1.1.11</ecNumber>
    </recommendedName>
    <alternativeName>
        <fullName evidence="1">Seryl-tRNA synthetase</fullName>
        <shortName evidence="1">SerRS</shortName>
    </alternativeName>
    <alternativeName>
        <fullName evidence="1">Seryl-tRNA(Ser/Sec) synthetase</fullName>
    </alternativeName>
</protein>
<keyword id="KW-0030">Aminoacyl-tRNA synthetase</keyword>
<keyword id="KW-0067">ATP-binding</keyword>
<keyword id="KW-0963">Cytoplasm</keyword>
<keyword id="KW-0436">Ligase</keyword>
<keyword id="KW-0547">Nucleotide-binding</keyword>
<keyword id="KW-0648">Protein biosynthesis</keyword>
<feature type="chain" id="PRO_1000098080" description="Serine--tRNA ligase">
    <location>
        <begin position="1"/>
        <end position="430"/>
    </location>
</feature>
<feature type="binding site" evidence="1">
    <location>
        <begin position="237"/>
        <end position="239"/>
    </location>
    <ligand>
        <name>L-serine</name>
        <dbReference type="ChEBI" id="CHEBI:33384"/>
    </ligand>
</feature>
<feature type="binding site" evidence="1">
    <location>
        <begin position="268"/>
        <end position="270"/>
    </location>
    <ligand>
        <name>ATP</name>
        <dbReference type="ChEBI" id="CHEBI:30616"/>
    </ligand>
</feature>
<feature type="binding site" evidence="1">
    <location>
        <position position="291"/>
    </location>
    <ligand>
        <name>L-serine</name>
        <dbReference type="ChEBI" id="CHEBI:33384"/>
    </ligand>
</feature>
<feature type="binding site" evidence="1">
    <location>
        <begin position="355"/>
        <end position="358"/>
    </location>
    <ligand>
        <name>ATP</name>
        <dbReference type="ChEBI" id="CHEBI:30616"/>
    </ligand>
</feature>
<feature type="binding site" evidence="1">
    <location>
        <position position="391"/>
    </location>
    <ligand>
        <name>L-serine</name>
        <dbReference type="ChEBI" id="CHEBI:33384"/>
    </ligand>
</feature>
<organism>
    <name type="scientific">Klebsiella pneumoniae (strain 342)</name>
    <dbReference type="NCBI Taxonomy" id="507522"/>
    <lineage>
        <taxon>Bacteria</taxon>
        <taxon>Pseudomonadati</taxon>
        <taxon>Pseudomonadota</taxon>
        <taxon>Gammaproteobacteria</taxon>
        <taxon>Enterobacterales</taxon>
        <taxon>Enterobacteriaceae</taxon>
        <taxon>Klebsiella/Raoultella group</taxon>
        <taxon>Klebsiella</taxon>
        <taxon>Klebsiella pneumoniae complex</taxon>
    </lineage>
</organism>
<name>SYS_KLEP3</name>
<reference key="1">
    <citation type="journal article" date="2008" name="PLoS Genet.">
        <title>Complete genome sequence of the N2-fixing broad host range endophyte Klebsiella pneumoniae 342 and virulence predictions verified in mice.</title>
        <authorList>
            <person name="Fouts D.E."/>
            <person name="Tyler H.L."/>
            <person name="DeBoy R.T."/>
            <person name="Daugherty S."/>
            <person name="Ren Q."/>
            <person name="Badger J.H."/>
            <person name="Durkin A.S."/>
            <person name="Huot H."/>
            <person name="Shrivastava S."/>
            <person name="Kothari S."/>
            <person name="Dodson R.J."/>
            <person name="Mohamoud Y."/>
            <person name="Khouri H."/>
            <person name="Roesch L.F.W."/>
            <person name="Krogfelt K.A."/>
            <person name="Struve C."/>
            <person name="Triplett E.W."/>
            <person name="Methe B.A."/>
        </authorList>
    </citation>
    <scope>NUCLEOTIDE SEQUENCE [LARGE SCALE GENOMIC DNA]</scope>
    <source>
        <strain>342</strain>
    </source>
</reference>
<proteinExistence type="inferred from homology"/>
<sequence length="430" mass="48645">MLDPNLLRTEPDAVAEKLARRGFKLDVDKLRALEERRKVLQVQTENLQAERNSRSKSIGQAKARGEDIEPLRLEVNKLGEQLDAAKSELETLLAEIRDIALAIPNIPHDDVPVGRDENDNVEVSRWGTPRQFDFEVRDHVTLGEMHGGLDFAAAVKLTGSRFVVMKGQLARLHRALAQFMLDLHTEQHGYSENYVPYLVNQDTLYGTGQLPKFAGDLFHTRPLEEEADSSNYALIPTAEVPLTNLVRDEIIDEDDLPIKMTAHTPCFRSEAGSYGRDTRGLIRMHQFDKVEMVQIVRPEDSMVALEEMTGHAEKVLQLLGLPYRKVALCTGDMGFSACKTYDLEVWVPAQNTYREISSCSNVWDFQARRMQARCRSKSDKKTRLVHTLNGSGLAVGRTLVALMENYQQADGRIEIPEILRPYMRGLEYIG</sequence>
<evidence type="ECO:0000255" key="1">
    <source>
        <dbReference type="HAMAP-Rule" id="MF_00176"/>
    </source>
</evidence>